<organism>
    <name type="scientific">Streptomyces avermitilis (strain ATCC 31267 / DSM 46492 / JCM 5070 / NBRC 14893 / NCIMB 12804 / NRRL 8165 / MA-4680)</name>
    <dbReference type="NCBI Taxonomy" id="227882"/>
    <lineage>
        <taxon>Bacteria</taxon>
        <taxon>Bacillati</taxon>
        <taxon>Actinomycetota</taxon>
        <taxon>Actinomycetes</taxon>
        <taxon>Kitasatosporales</taxon>
        <taxon>Streptomycetaceae</taxon>
        <taxon>Streptomyces</taxon>
    </lineage>
</organism>
<dbReference type="EMBL" id="BA000030">
    <property type="protein sequence ID" value="BAC74450.1"/>
    <property type="molecule type" value="Genomic_DNA"/>
</dbReference>
<dbReference type="RefSeq" id="WP_010988138.1">
    <property type="nucleotide sequence ID" value="NZ_JZJK01000082.1"/>
</dbReference>
<dbReference type="SMR" id="Q828D0"/>
<dbReference type="GeneID" id="41543808"/>
<dbReference type="KEGG" id="sma:SAVERM_6739"/>
<dbReference type="eggNOG" id="COG0292">
    <property type="taxonomic scope" value="Bacteria"/>
</dbReference>
<dbReference type="HOGENOM" id="CLU_123265_0_0_11"/>
<dbReference type="OrthoDB" id="9808966at2"/>
<dbReference type="Proteomes" id="UP000000428">
    <property type="component" value="Chromosome"/>
</dbReference>
<dbReference type="GO" id="GO:1990904">
    <property type="term" value="C:ribonucleoprotein complex"/>
    <property type="evidence" value="ECO:0007669"/>
    <property type="project" value="UniProtKB-KW"/>
</dbReference>
<dbReference type="GO" id="GO:0005840">
    <property type="term" value="C:ribosome"/>
    <property type="evidence" value="ECO:0007669"/>
    <property type="project" value="UniProtKB-KW"/>
</dbReference>
<dbReference type="GO" id="GO:0019843">
    <property type="term" value="F:rRNA binding"/>
    <property type="evidence" value="ECO:0007669"/>
    <property type="project" value="UniProtKB-UniRule"/>
</dbReference>
<dbReference type="GO" id="GO:0003735">
    <property type="term" value="F:structural constituent of ribosome"/>
    <property type="evidence" value="ECO:0007669"/>
    <property type="project" value="InterPro"/>
</dbReference>
<dbReference type="GO" id="GO:0000027">
    <property type="term" value="P:ribosomal large subunit assembly"/>
    <property type="evidence" value="ECO:0007669"/>
    <property type="project" value="UniProtKB-UniRule"/>
</dbReference>
<dbReference type="GO" id="GO:0006412">
    <property type="term" value="P:translation"/>
    <property type="evidence" value="ECO:0007669"/>
    <property type="project" value="InterPro"/>
</dbReference>
<dbReference type="CDD" id="cd07026">
    <property type="entry name" value="Ribosomal_L20"/>
    <property type="match status" value="1"/>
</dbReference>
<dbReference type="FunFam" id="1.10.1900.20:FF:000001">
    <property type="entry name" value="50S ribosomal protein L20"/>
    <property type="match status" value="1"/>
</dbReference>
<dbReference type="Gene3D" id="6.10.160.10">
    <property type="match status" value="1"/>
</dbReference>
<dbReference type="Gene3D" id="1.10.1900.20">
    <property type="entry name" value="Ribosomal protein L20"/>
    <property type="match status" value="1"/>
</dbReference>
<dbReference type="HAMAP" id="MF_00382">
    <property type="entry name" value="Ribosomal_bL20"/>
    <property type="match status" value="1"/>
</dbReference>
<dbReference type="InterPro" id="IPR005813">
    <property type="entry name" value="Ribosomal_bL20"/>
</dbReference>
<dbReference type="InterPro" id="IPR049946">
    <property type="entry name" value="RIBOSOMAL_L20_CS"/>
</dbReference>
<dbReference type="InterPro" id="IPR035566">
    <property type="entry name" value="Ribosomal_protein_bL20_C"/>
</dbReference>
<dbReference type="NCBIfam" id="TIGR01032">
    <property type="entry name" value="rplT_bact"/>
    <property type="match status" value="1"/>
</dbReference>
<dbReference type="PANTHER" id="PTHR10986">
    <property type="entry name" value="39S RIBOSOMAL PROTEIN L20"/>
    <property type="match status" value="1"/>
</dbReference>
<dbReference type="Pfam" id="PF00453">
    <property type="entry name" value="Ribosomal_L20"/>
    <property type="match status" value="1"/>
</dbReference>
<dbReference type="PRINTS" id="PR00062">
    <property type="entry name" value="RIBOSOMALL20"/>
</dbReference>
<dbReference type="SUPFAM" id="SSF74731">
    <property type="entry name" value="Ribosomal protein L20"/>
    <property type="match status" value="1"/>
</dbReference>
<dbReference type="PROSITE" id="PS00937">
    <property type="entry name" value="RIBOSOMAL_L20"/>
    <property type="match status" value="1"/>
</dbReference>
<name>RL20_STRAW</name>
<accession>Q828D0</accession>
<comment type="function">
    <text evidence="1">Binds directly to 23S ribosomal RNA and is necessary for the in vitro assembly process of the 50S ribosomal subunit. It is not involved in the protein synthesizing functions of that subunit.</text>
</comment>
<comment type="similarity">
    <text evidence="1">Belongs to the bacterial ribosomal protein bL20 family.</text>
</comment>
<reference key="1">
    <citation type="journal article" date="2001" name="Proc. Natl. Acad. Sci. U.S.A.">
        <title>Genome sequence of an industrial microorganism Streptomyces avermitilis: deducing the ability of producing secondary metabolites.</title>
        <authorList>
            <person name="Omura S."/>
            <person name="Ikeda H."/>
            <person name="Ishikawa J."/>
            <person name="Hanamoto A."/>
            <person name="Takahashi C."/>
            <person name="Shinose M."/>
            <person name="Takahashi Y."/>
            <person name="Horikawa H."/>
            <person name="Nakazawa H."/>
            <person name="Osonoe T."/>
            <person name="Kikuchi H."/>
            <person name="Shiba T."/>
            <person name="Sakaki Y."/>
            <person name="Hattori M."/>
        </authorList>
    </citation>
    <scope>NUCLEOTIDE SEQUENCE [LARGE SCALE GENOMIC DNA]</scope>
    <source>
        <strain>ATCC 31267 / DSM 46492 / JCM 5070 / NBRC 14893 / NCIMB 12804 / NRRL 8165 / MA-4680</strain>
    </source>
</reference>
<reference key="2">
    <citation type="journal article" date="2003" name="Nat. Biotechnol.">
        <title>Complete genome sequence and comparative analysis of the industrial microorganism Streptomyces avermitilis.</title>
        <authorList>
            <person name="Ikeda H."/>
            <person name="Ishikawa J."/>
            <person name="Hanamoto A."/>
            <person name="Shinose M."/>
            <person name="Kikuchi H."/>
            <person name="Shiba T."/>
            <person name="Sakaki Y."/>
            <person name="Hattori M."/>
            <person name="Omura S."/>
        </authorList>
    </citation>
    <scope>NUCLEOTIDE SEQUENCE [LARGE SCALE GENOMIC DNA]</scope>
    <source>
        <strain>ATCC 31267 / DSM 46492 / JCM 5070 / NBRC 14893 / NCIMB 12804 / NRRL 8165 / MA-4680</strain>
    </source>
</reference>
<feature type="chain" id="PRO_0000177235" description="Large ribosomal subunit protein bL20">
    <location>
        <begin position="1"/>
        <end position="127"/>
    </location>
</feature>
<gene>
    <name evidence="1" type="primary">rplT</name>
    <name type="ordered locus">SAV_6739</name>
</gene>
<sequence>MARVKRAVNAHKKRRAILEAASGYRGQRSRLYRKAKEQVTHSLVYNYNDRKKRKGDFRQLWIQRINAAARANGMTYNRLIQGLKAANIEVDRKILAELAVNDAGAFAALVEVAQKALPSDVNAPKAA</sequence>
<evidence type="ECO:0000255" key="1">
    <source>
        <dbReference type="HAMAP-Rule" id="MF_00382"/>
    </source>
</evidence>
<evidence type="ECO:0000305" key="2"/>
<proteinExistence type="inferred from homology"/>
<protein>
    <recommendedName>
        <fullName evidence="1">Large ribosomal subunit protein bL20</fullName>
    </recommendedName>
    <alternativeName>
        <fullName evidence="2">50S ribosomal protein L20</fullName>
    </alternativeName>
</protein>
<keyword id="KW-1185">Reference proteome</keyword>
<keyword id="KW-0687">Ribonucleoprotein</keyword>
<keyword id="KW-0689">Ribosomal protein</keyword>
<keyword id="KW-0694">RNA-binding</keyword>
<keyword id="KW-0699">rRNA-binding</keyword>